<accession>P34872</accession>
<gene>
    <name type="primary">mt-cyb</name>
    <name type="synonym">cob</name>
    <name type="synonym">cytb</name>
    <name type="synonym">mtcyb</name>
</gene>
<keyword id="KW-0249">Electron transport</keyword>
<keyword id="KW-0349">Heme</keyword>
<keyword id="KW-0408">Iron</keyword>
<keyword id="KW-0472">Membrane</keyword>
<keyword id="KW-0479">Metal-binding</keyword>
<keyword id="KW-0496">Mitochondrion</keyword>
<keyword id="KW-0999">Mitochondrion inner membrane</keyword>
<keyword id="KW-0679">Respiratory chain</keyword>
<keyword id="KW-0812">Transmembrane</keyword>
<keyword id="KW-1133">Transmembrane helix</keyword>
<keyword id="KW-0813">Transport</keyword>
<keyword id="KW-0830">Ubiquinone</keyword>
<dbReference type="EMBL" id="L08039">
    <property type="protein sequence ID" value="AAA31956.1"/>
    <property type="molecule type" value="Genomic_DNA"/>
</dbReference>
<dbReference type="SMR" id="P34872"/>
<dbReference type="GO" id="GO:0005743">
    <property type="term" value="C:mitochondrial inner membrane"/>
    <property type="evidence" value="ECO:0007669"/>
    <property type="project" value="UniProtKB-SubCell"/>
</dbReference>
<dbReference type="GO" id="GO:0045275">
    <property type="term" value="C:respiratory chain complex III"/>
    <property type="evidence" value="ECO:0007669"/>
    <property type="project" value="InterPro"/>
</dbReference>
<dbReference type="GO" id="GO:0046872">
    <property type="term" value="F:metal ion binding"/>
    <property type="evidence" value="ECO:0007669"/>
    <property type="project" value="UniProtKB-KW"/>
</dbReference>
<dbReference type="GO" id="GO:0008121">
    <property type="term" value="F:ubiquinol-cytochrome-c reductase activity"/>
    <property type="evidence" value="ECO:0007669"/>
    <property type="project" value="InterPro"/>
</dbReference>
<dbReference type="GO" id="GO:0006122">
    <property type="term" value="P:mitochondrial electron transport, ubiquinol to cytochrome c"/>
    <property type="evidence" value="ECO:0007669"/>
    <property type="project" value="TreeGrafter"/>
</dbReference>
<dbReference type="CDD" id="cd00290">
    <property type="entry name" value="cytochrome_b_C"/>
    <property type="match status" value="1"/>
</dbReference>
<dbReference type="CDD" id="cd00284">
    <property type="entry name" value="Cytochrome_b_N"/>
    <property type="match status" value="1"/>
</dbReference>
<dbReference type="FunFam" id="1.20.810.10:FF:000002">
    <property type="entry name" value="Cytochrome b"/>
    <property type="match status" value="1"/>
</dbReference>
<dbReference type="Gene3D" id="1.20.810.10">
    <property type="entry name" value="Cytochrome Bc1 Complex, Chain C"/>
    <property type="match status" value="1"/>
</dbReference>
<dbReference type="InterPro" id="IPR005798">
    <property type="entry name" value="Cyt_b/b6_C"/>
</dbReference>
<dbReference type="InterPro" id="IPR036150">
    <property type="entry name" value="Cyt_b/b6_C_sf"/>
</dbReference>
<dbReference type="InterPro" id="IPR005797">
    <property type="entry name" value="Cyt_b/b6_N"/>
</dbReference>
<dbReference type="InterPro" id="IPR027387">
    <property type="entry name" value="Cytb/b6-like_sf"/>
</dbReference>
<dbReference type="InterPro" id="IPR030689">
    <property type="entry name" value="Cytochrome_b"/>
</dbReference>
<dbReference type="InterPro" id="IPR048260">
    <property type="entry name" value="Cytochrome_b_C_euk/bac"/>
</dbReference>
<dbReference type="InterPro" id="IPR048259">
    <property type="entry name" value="Cytochrome_b_N_euk/bac"/>
</dbReference>
<dbReference type="InterPro" id="IPR016174">
    <property type="entry name" value="Di-haem_cyt_TM"/>
</dbReference>
<dbReference type="PANTHER" id="PTHR19271">
    <property type="entry name" value="CYTOCHROME B"/>
    <property type="match status" value="1"/>
</dbReference>
<dbReference type="PANTHER" id="PTHR19271:SF16">
    <property type="entry name" value="CYTOCHROME B"/>
    <property type="match status" value="1"/>
</dbReference>
<dbReference type="Pfam" id="PF00032">
    <property type="entry name" value="Cytochrom_B_C"/>
    <property type="match status" value="1"/>
</dbReference>
<dbReference type="Pfam" id="PF00033">
    <property type="entry name" value="Cytochrome_B"/>
    <property type="match status" value="1"/>
</dbReference>
<dbReference type="PIRSF" id="PIRSF038885">
    <property type="entry name" value="COB"/>
    <property type="match status" value="1"/>
</dbReference>
<dbReference type="SUPFAM" id="SSF81648">
    <property type="entry name" value="a domain/subunit of cytochrome bc1 complex (Ubiquinol-cytochrome c reductase)"/>
    <property type="match status" value="1"/>
</dbReference>
<dbReference type="SUPFAM" id="SSF81342">
    <property type="entry name" value="Transmembrane di-heme cytochromes"/>
    <property type="match status" value="1"/>
</dbReference>
<dbReference type="PROSITE" id="PS51003">
    <property type="entry name" value="CYTB_CTER"/>
    <property type="match status" value="1"/>
</dbReference>
<dbReference type="PROSITE" id="PS51002">
    <property type="entry name" value="CYTB_NTER"/>
    <property type="match status" value="1"/>
</dbReference>
<name>CYB_NEGBR</name>
<reference key="1">
    <citation type="journal article" date="1992" name="Nature">
        <title>Rates of mitochondrial DNA evolution in sharks are slow compared with mammals.</title>
        <authorList>
            <person name="Martin A.P."/>
            <person name="Naylor G.J.P."/>
            <person name="Palumbi S.R."/>
        </authorList>
    </citation>
    <scope>NUCLEOTIDE SEQUENCE [GENOMIC DNA]</scope>
</reference>
<sequence>MAINIRKTHPLLKIMNHALIDLPAPSNISLWWNFGSLLGLCLIIQILTGLFLAMHYTADISMAFSSVVHICRDVNYGWLIRNIHANGASLFFICVYLHIARGLYYGSYLYKETWNIGVILLFLLMATAFVGYVLPWGQMSFWGATVITNLLSAFPYIGNMLVQWIWGGFSVDNATLTRFFAFHFLLPFLILALTVIHLLFLHETGSNNPLGINSDADKISFHPYFSYKDLLGFFVMIFLLATLALFTPNLLGDAENFIPANPLVTPPHIKPEWYFLFAYAILRSIPNKLGGVLALLFSIFILMLVPLLHTSKQRSIIFRPLTQIFFWFLVANSIILTWIGGQPVEQPFIMVGQIASISYFSLFLIIMPFTSWCENKILSLN</sequence>
<evidence type="ECO:0000250" key="1"/>
<evidence type="ECO:0000250" key="2">
    <source>
        <dbReference type="UniProtKB" id="P00157"/>
    </source>
</evidence>
<evidence type="ECO:0000255" key="3">
    <source>
        <dbReference type="PROSITE-ProRule" id="PRU00967"/>
    </source>
</evidence>
<evidence type="ECO:0000255" key="4">
    <source>
        <dbReference type="PROSITE-ProRule" id="PRU00968"/>
    </source>
</evidence>
<proteinExistence type="inferred from homology"/>
<feature type="chain" id="PRO_0000061267" description="Cytochrome b">
    <location>
        <begin position="1"/>
        <end position="381"/>
    </location>
</feature>
<feature type="transmembrane region" description="Helical" evidence="2">
    <location>
        <begin position="34"/>
        <end position="54"/>
    </location>
</feature>
<feature type="transmembrane region" description="Helical" evidence="2">
    <location>
        <begin position="78"/>
        <end position="99"/>
    </location>
</feature>
<feature type="transmembrane region" description="Helical" evidence="2">
    <location>
        <begin position="114"/>
        <end position="134"/>
    </location>
</feature>
<feature type="transmembrane region" description="Helical" evidence="2">
    <location>
        <begin position="179"/>
        <end position="199"/>
    </location>
</feature>
<feature type="transmembrane region" description="Helical" evidence="2">
    <location>
        <begin position="227"/>
        <end position="247"/>
    </location>
</feature>
<feature type="transmembrane region" description="Helical" evidence="2">
    <location>
        <begin position="289"/>
        <end position="309"/>
    </location>
</feature>
<feature type="transmembrane region" description="Helical" evidence="2">
    <location>
        <begin position="321"/>
        <end position="341"/>
    </location>
</feature>
<feature type="transmembrane region" description="Helical" evidence="2">
    <location>
        <begin position="348"/>
        <end position="368"/>
    </location>
</feature>
<feature type="binding site" description="axial binding residue" evidence="2">
    <location>
        <position position="84"/>
    </location>
    <ligand>
        <name>heme b</name>
        <dbReference type="ChEBI" id="CHEBI:60344"/>
        <label>b562</label>
    </ligand>
    <ligandPart>
        <name>Fe</name>
        <dbReference type="ChEBI" id="CHEBI:18248"/>
    </ligandPart>
</feature>
<feature type="binding site" description="axial binding residue" evidence="2">
    <location>
        <position position="98"/>
    </location>
    <ligand>
        <name>heme b</name>
        <dbReference type="ChEBI" id="CHEBI:60344"/>
        <label>b566</label>
    </ligand>
    <ligandPart>
        <name>Fe</name>
        <dbReference type="ChEBI" id="CHEBI:18248"/>
    </ligandPart>
</feature>
<feature type="binding site" description="axial binding residue" evidence="2">
    <location>
        <position position="183"/>
    </location>
    <ligand>
        <name>heme b</name>
        <dbReference type="ChEBI" id="CHEBI:60344"/>
        <label>b562</label>
    </ligand>
    <ligandPart>
        <name>Fe</name>
        <dbReference type="ChEBI" id="CHEBI:18248"/>
    </ligandPart>
</feature>
<feature type="binding site" description="axial binding residue" evidence="2">
    <location>
        <position position="197"/>
    </location>
    <ligand>
        <name>heme b</name>
        <dbReference type="ChEBI" id="CHEBI:60344"/>
        <label>b566</label>
    </ligand>
    <ligandPart>
        <name>Fe</name>
        <dbReference type="ChEBI" id="CHEBI:18248"/>
    </ligandPart>
</feature>
<feature type="binding site" evidence="2">
    <location>
        <position position="202"/>
    </location>
    <ligand>
        <name>a ubiquinone</name>
        <dbReference type="ChEBI" id="CHEBI:16389"/>
    </ligand>
</feature>
<organism>
    <name type="scientific">Negaprion brevirostris</name>
    <name type="common">Lemon shark</name>
    <name type="synonym">Hypoprion brevirostris</name>
    <dbReference type="NCBI Taxonomy" id="7821"/>
    <lineage>
        <taxon>Eukaryota</taxon>
        <taxon>Metazoa</taxon>
        <taxon>Chordata</taxon>
        <taxon>Craniata</taxon>
        <taxon>Vertebrata</taxon>
        <taxon>Chondrichthyes</taxon>
        <taxon>Elasmobranchii</taxon>
        <taxon>Galeomorphii</taxon>
        <taxon>Galeoidea</taxon>
        <taxon>Carcharhiniformes</taxon>
        <taxon>Carcharhinidae</taxon>
        <taxon>Negaprion</taxon>
    </lineage>
</organism>
<geneLocation type="mitochondrion"/>
<protein>
    <recommendedName>
        <fullName>Cytochrome b</fullName>
    </recommendedName>
    <alternativeName>
        <fullName>Complex III subunit 3</fullName>
    </alternativeName>
    <alternativeName>
        <fullName>Complex III subunit III</fullName>
    </alternativeName>
    <alternativeName>
        <fullName>Cytochrome b-c1 complex subunit 3</fullName>
    </alternativeName>
    <alternativeName>
        <fullName>Ubiquinol-cytochrome-c reductase complex cytochrome b subunit</fullName>
    </alternativeName>
</protein>
<comment type="function">
    <text evidence="2">Component of the ubiquinol-cytochrome c reductase complex (complex III or cytochrome b-c1 complex) that is part of the mitochondrial respiratory chain. The b-c1 complex mediates electron transfer from ubiquinol to cytochrome c. Contributes to the generation of a proton gradient across the mitochondrial membrane that is then used for ATP synthesis.</text>
</comment>
<comment type="cofactor">
    <cofactor evidence="2">
        <name>heme b</name>
        <dbReference type="ChEBI" id="CHEBI:60344"/>
    </cofactor>
    <text evidence="2">Binds 2 heme b groups non-covalently.</text>
</comment>
<comment type="subunit">
    <text evidence="2">The cytochrome bc1 complex contains 3 respiratory subunits (MT-CYB, CYC1 and UQCRFS1), 2 core proteins (UQCRC1 and UQCRC2) and probably 6 low-molecular weight proteins.</text>
</comment>
<comment type="subcellular location">
    <subcellularLocation>
        <location evidence="2">Mitochondrion inner membrane</location>
        <topology evidence="2">Multi-pass membrane protein</topology>
    </subcellularLocation>
</comment>
<comment type="miscellaneous">
    <text evidence="1">Heme 1 (or BL or b562) is low-potential and absorbs at about 562 nm, and heme 2 (or BH or b566) is high-potential and absorbs at about 566 nm.</text>
</comment>
<comment type="similarity">
    <text evidence="3 4">Belongs to the cytochrome b family.</text>
</comment>
<comment type="caution">
    <text evidence="2">The full-length protein contains only eight transmembrane helices, not nine as predicted by bioinformatics tools.</text>
</comment>